<protein>
    <recommendedName>
        <fullName>Nebulin-related-anchoring protein</fullName>
        <shortName>N-RAP</shortName>
    </recommendedName>
</protein>
<reference evidence="16 20" key="1">
    <citation type="journal article" date="2003" name="Cell Motil. Cytoskeleton">
        <title>Genomic organization, alternative splicing, and expression of human and mouse N-RAP, a nebulin-related LIM protein of striated muscle.</title>
        <authorList>
            <person name="Mohiddin S.A."/>
            <person name="Lu S."/>
            <person name="Cardoso J.-P."/>
            <person name="Carroll S."/>
            <person name="Jha S."/>
            <person name="Horowits R."/>
            <person name="Fananapazir L."/>
        </authorList>
    </citation>
    <scope>NUCLEOTIDE SEQUENCE [MRNA] (ISOFORMS 1 AND 4)</scope>
    <scope>SUBCELLULAR LOCATION</scope>
    <scope>TISSUE SPECIFICITY</scope>
    <scope>VARIANT VAL-1183</scope>
</reference>
<reference evidence="16 19" key="2">
    <citation type="submission" date="2002-08" db="EMBL/GenBank/DDBJ databases">
        <title>Human Nrap, a novel gene which interact with actin.</title>
        <authorList>
            <person name="Yuan H.F."/>
            <person name="Wang X."/>
            <person name="Wang D.M."/>
            <person name="Li H.M."/>
            <person name="Feng K."/>
            <person name="Bai C.X."/>
            <person name="Zhang R."/>
            <person name="Chen L."/>
            <person name="Li Y.H."/>
            <person name="Gao Y.H."/>
            <person name="Zhen M."/>
            <person name="Yue W."/>
            <person name="Xie C."/>
            <person name="Xie X.Y."/>
            <person name="Niu L.L."/>
            <person name="Gao W.J."/>
            <person name="Zhang J."/>
            <person name="Cao H."/>
            <person name="Pei X.T."/>
        </authorList>
    </citation>
    <scope>NUCLEOTIDE SEQUENCE [MRNA] (ISOFORM 4)</scope>
    <scope>VARIANTS ALA-208; THR-344; ARG-360 AND VAL-674</scope>
    <source>
        <tissue evidence="19">Skeletal muscle</tissue>
    </source>
</reference>
<reference key="3">
    <citation type="journal article" date="2007" name="BMC Genomics">
        <title>The full-ORF clone resource of the German cDNA consortium.</title>
        <authorList>
            <person name="Bechtel S."/>
            <person name="Rosenfelder H."/>
            <person name="Duda A."/>
            <person name="Schmidt C.P."/>
            <person name="Ernst U."/>
            <person name="Wellenreuther R."/>
            <person name="Mehrle A."/>
            <person name="Schuster C."/>
            <person name="Bahr A."/>
            <person name="Bloecker H."/>
            <person name="Heubner D."/>
            <person name="Hoerlein A."/>
            <person name="Michel G."/>
            <person name="Wedler H."/>
            <person name="Koehrer K."/>
            <person name="Ottenwaelder B."/>
            <person name="Poustka A."/>
            <person name="Wiemann S."/>
            <person name="Schupp I."/>
        </authorList>
    </citation>
    <scope>NUCLEOTIDE SEQUENCE [LARGE SCALE MRNA] (ISOFORM 1)</scope>
    <scope>VARIANTS ALA-208; CYS-249; THR-344; ARG-360; LEU-490; CYS-884; VAL-1112; VAL-1183; PRO-1531 AND CYS-1566</scope>
    <source>
        <tissue>Skeletal muscle</tissue>
    </source>
</reference>
<reference evidence="21" key="4">
    <citation type="journal article" date="2004" name="Nature">
        <title>The DNA sequence and comparative analysis of human chromosome 10.</title>
        <authorList>
            <person name="Deloukas P."/>
            <person name="Earthrowl M.E."/>
            <person name="Grafham D.V."/>
            <person name="Rubenfield M."/>
            <person name="French L."/>
            <person name="Steward C.A."/>
            <person name="Sims S.K."/>
            <person name="Jones M.C."/>
            <person name="Searle S."/>
            <person name="Scott C."/>
            <person name="Howe K."/>
            <person name="Hunt S.E."/>
            <person name="Andrews T.D."/>
            <person name="Gilbert J.G.R."/>
            <person name="Swarbreck D."/>
            <person name="Ashurst J.L."/>
            <person name="Taylor A."/>
            <person name="Battles J."/>
            <person name="Bird C.P."/>
            <person name="Ainscough R."/>
            <person name="Almeida J.P."/>
            <person name="Ashwell R.I.S."/>
            <person name="Ambrose K.D."/>
            <person name="Babbage A.K."/>
            <person name="Bagguley C.L."/>
            <person name="Bailey J."/>
            <person name="Banerjee R."/>
            <person name="Bates K."/>
            <person name="Beasley H."/>
            <person name="Bray-Allen S."/>
            <person name="Brown A.J."/>
            <person name="Brown J.Y."/>
            <person name="Burford D.C."/>
            <person name="Burrill W."/>
            <person name="Burton J."/>
            <person name="Cahill P."/>
            <person name="Camire D."/>
            <person name="Carter N.P."/>
            <person name="Chapman J.C."/>
            <person name="Clark S.Y."/>
            <person name="Clarke G."/>
            <person name="Clee C.M."/>
            <person name="Clegg S."/>
            <person name="Corby N."/>
            <person name="Coulson A."/>
            <person name="Dhami P."/>
            <person name="Dutta I."/>
            <person name="Dunn M."/>
            <person name="Faulkner L."/>
            <person name="Frankish A."/>
            <person name="Frankland J.A."/>
            <person name="Garner P."/>
            <person name="Garnett J."/>
            <person name="Gribble S."/>
            <person name="Griffiths C."/>
            <person name="Grocock R."/>
            <person name="Gustafson E."/>
            <person name="Hammond S."/>
            <person name="Harley J.L."/>
            <person name="Hart E."/>
            <person name="Heath P.D."/>
            <person name="Ho T.P."/>
            <person name="Hopkins B."/>
            <person name="Horne J."/>
            <person name="Howden P.J."/>
            <person name="Huckle E."/>
            <person name="Hynds C."/>
            <person name="Johnson C."/>
            <person name="Johnson D."/>
            <person name="Kana A."/>
            <person name="Kay M."/>
            <person name="Kimberley A.M."/>
            <person name="Kershaw J.K."/>
            <person name="Kokkinaki M."/>
            <person name="Laird G.K."/>
            <person name="Lawlor S."/>
            <person name="Lee H.M."/>
            <person name="Leongamornlert D.A."/>
            <person name="Laird G."/>
            <person name="Lloyd C."/>
            <person name="Lloyd D.M."/>
            <person name="Loveland J."/>
            <person name="Lovell J."/>
            <person name="McLaren S."/>
            <person name="McLay K.E."/>
            <person name="McMurray A."/>
            <person name="Mashreghi-Mohammadi M."/>
            <person name="Matthews L."/>
            <person name="Milne S."/>
            <person name="Nickerson T."/>
            <person name="Nguyen M."/>
            <person name="Overton-Larty E."/>
            <person name="Palmer S.A."/>
            <person name="Pearce A.V."/>
            <person name="Peck A.I."/>
            <person name="Pelan S."/>
            <person name="Phillimore B."/>
            <person name="Porter K."/>
            <person name="Rice C.M."/>
            <person name="Rogosin A."/>
            <person name="Ross M.T."/>
            <person name="Sarafidou T."/>
            <person name="Sehra H.K."/>
            <person name="Shownkeen R."/>
            <person name="Skuce C.D."/>
            <person name="Smith M."/>
            <person name="Standring L."/>
            <person name="Sycamore N."/>
            <person name="Tester J."/>
            <person name="Thorpe A."/>
            <person name="Torcasso W."/>
            <person name="Tracey A."/>
            <person name="Tromans A."/>
            <person name="Tsolas J."/>
            <person name="Wall M."/>
            <person name="Walsh J."/>
            <person name="Wang H."/>
            <person name="Weinstock K."/>
            <person name="West A.P."/>
            <person name="Willey D.L."/>
            <person name="Whitehead S.L."/>
            <person name="Wilming L."/>
            <person name="Wray P.W."/>
            <person name="Young L."/>
            <person name="Chen Y."/>
            <person name="Lovering R.C."/>
            <person name="Moschonas N.K."/>
            <person name="Siebert R."/>
            <person name="Fechtel K."/>
            <person name="Bentley D."/>
            <person name="Durbin R.M."/>
            <person name="Hubbard T."/>
            <person name="Doucette-Stamm L."/>
            <person name="Beck S."/>
            <person name="Smith D.R."/>
            <person name="Rogers J."/>
        </authorList>
    </citation>
    <scope>NUCLEOTIDE SEQUENCE [LARGE SCALE GENOMIC DNA]</scope>
    <scope>VARIANT LEU-490</scope>
</reference>
<reference evidence="16 22" key="5">
    <citation type="journal article" date="2004" name="Nat. Genet.">
        <title>Complete sequencing and characterization of 21,243 full-length human cDNAs.</title>
        <authorList>
            <person name="Ota T."/>
            <person name="Suzuki Y."/>
            <person name="Nishikawa T."/>
            <person name="Otsuki T."/>
            <person name="Sugiyama T."/>
            <person name="Irie R."/>
            <person name="Wakamatsu A."/>
            <person name="Hayashi K."/>
            <person name="Sato H."/>
            <person name="Nagai K."/>
            <person name="Kimura K."/>
            <person name="Makita H."/>
            <person name="Sekine M."/>
            <person name="Obayashi M."/>
            <person name="Nishi T."/>
            <person name="Shibahara T."/>
            <person name="Tanaka T."/>
            <person name="Ishii S."/>
            <person name="Yamamoto J."/>
            <person name="Saito K."/>
            <person name="Kawai Y."/>
            <person name="Isono Y."/>
            <person name="Nakamura Y."/>
            <person name="Nagahari K."/>
            <person name="Murakami K."/>
            <person name="Yasuda T."/>
            <person name="Iwayanagi T."/>
            <person name="Wagatsuma M."/>
            <person name="Shiratori A."/>
            <person name="Sudo H."/>
            <person name="Hosoiri T."/>
            <person name="Kaku Y."/>
            <person name="Kodaira H."/>
            <person name="Kondo H."/>
            <person name="Sugawara M."/>
            <person name="Takahashi M."/>
            <person name="Kanda K."/>
            <person name="Yokoi T."/>
            <person name="Furuya T."/>
            <person name="Kikkawa E."/>
            <person name="Omura Y."/>
            <person name="Abe K."/>
            <person name="Kamihara K."/>
            <person name="Katsuta N."/>
            <person name="Sato K."/>
            <person name="Tanikawa M."/>
            <person name="Yamazaki M."/>
            <person name="Ninomiya K."/>
            <person name="Ishibashi T."/>
            <person name="Yamashita H."/>
            <person name="Murakawa K."/>
            <person name="Fujimori K."/>
            <person name="Tanai H."/>
            <person name="Kimata M."/>
            <person name="Watanabe M."/>
            <person name="Hiraoka S."/>
            <person name="Chiba Y."/>
            <person name="Ishida S."/>
            <person name="Ono Y."/>
            <person name="Takiguchi S."/>
            <person name="Watanabe S."/>
            <person name="Yosida M."/>
            <person name="Hotuta T."/>
            <person name="Kusano J."/>
            <person name="Kanehori K."/>
            <person name="Takahashi-Fujii A."/>
            <person name="Hara H."/>
            <person name="Tanase T.-O."/>
            <person name="Nomura Y."/>
            <person name="Togiya S."/>
            <person name="Komai F."/>
            <person name="Hara R."/>
            <person name="Takeuchi K."/>
            <person name="Arita M."/>
            <person name="Imose N."/>
            <person name="Musashino K."/>
            <person name="Yuuki H."/>
            <person name="Oshima A."/>
            <person name="Sasaki N."/>
            <person name="Aotsuka S."/>
            <person name="Yoshikawa Y."/>
            <person name="Matsunawa H."/>
            <person name="Ichihara T."/>
            <person name="Shiohata N."/>
            <person name="Sano S."/>
            <person name="Moriya S."/>
            <person name="Momiyama H."/>
            <person name="Satoh N."/>
            <person name="Takami S."/>
            <person name="Terashima Y."/>
            <person name="Suzuki O."/>
            <person name="Nakagawa S."/>
            <person name="Senoh A."/>
            <person name="Mizoguchi H."/>
            <person name="Goto Y."/>
            <person name="Shimizu F."/>
            <person name="Wakebe H."/>
            <person name="Hishigaki H."/>
            <person name="Watanabe T."/>
            <person name="Sugiyama A."/>
            <person name="Takemoto M."/>
            <person name="Kawakami B."/>
            <person name="Yamazaki M."/>
            <person name="Watanabe K."/>
            <person name="Kumagai A."/>
            <person name="Itakura S."/>
            <person name="Fukuzumi Y."/>
            <person name="Fujimori Y."/>
            <person name="Komiyama M."/>
            <person name="Tashiro H."/>
            <person name="Tanigami A."/>
            <person name="Fujiwara T."/>
            <person name="Ono T."/>
            <person name="Yamada K."/>
            <person name="Fujii Y."/>
            <person name="Ozaki K."/>
            <person name="Hirao M."/>
            <person name="Ohmori Y."/>
            <person name="Kawabata A."/>
            <person name="Hikiji T."/>
            <person name="Kobatake N."/>
            <person name="Inagaki H."/>
            <person name="Ikema Y."/>
            <person name="Okamoto S."/>
            <person name="Okitani R."/>
            <person name="Kawakami T."/>
            <person name="Noguchi S."/>
            <person name="Itoh T."/>
            <person name="Shigeta K."/>
            <person name="Senba T."/>
            <person name="Matsumura K."/>
            <person name="Nakajima Y."/>
            <person name="Mizuno T."/>
            <person name="Morinaga M."/>
            <person name="Sasaki M."/>
            <person name="Togashi T."/>
            <person name="Oyama M."/>
            <person name="Hata H."/>
            <person name="Watanabe M."/>
            <person name="Komatsu T."/>
            <person name="Mizushima-Sugano J."/>
            <person name="Satoh T."/>
            <person name="Shirai Y."/>
            <person name="Takahashi Y."/>
            <person name="Nakagawa K."/>
            <person name="Okumura K."/>
            <person name="Nagase T."/>
            <person name="Nomura N."/>
            <person name="Kikuchi H."/>
            <person name="Masuho Y."/>
            <person name="Yamashita R."/>
            <person name="Nakai K."/>
            <person name="Yada T."/>
            <person name="Nakamura Y."/>
            <person name="Ohara O."/>
            <person name="Isogai T."/>
            <person name="Sugano S."/>
        </authorList>
    </citation>
    <scope>NUCLEOTIDE SEQUENCE [LARGE SCALE MRNA] OF 1-580 (ISOFORMS 1/2)</scope>
    <scope>NUCLEOTIDE SEQUENCE [LARGE SCALE MRNA] OF 1311-1730 (ISOFORM 1)</scope>
    <scope>VARIANTS ALA-208; THR-344 AND ARG-360</scope>
    <source>
        <tissue evidence="22">Skeletal muscle</tissue>
    </source>
</reference>
<reference evidence="16 18" key="6">
    <citation type="journal article" date="2004" name="Genome Res.">
        <title>The status, quality, and expansion of the NIH full-length cDNA project: the Mammalian Gene Collection (MGC).</title>
        <authorList>
            <consortium name="The MGC Project Team"/>
        </authorList>
    </citation>
    <scope>NUCLEOTIDE SEQUENCE [LARGE SCALE MRNA] OF 1-270 (ISOFORM 1)</scope>
    <scope>VARIANT ALA-208</scope>
    <source>
        <tissue evidence="18">Skeletal muscle</tissue>
    </source>
</reference>
<reference evidence="16 17" key="7">
    <citation type="journal article" date="1997" name="Genomics">
        <title>Mapping of the gene (NRAP) encoding N-RAP in the mouse and human genomes.</title>
        <authorList>
            <person name="Luo G."/>
            <person name="Leroy E."/>
            <person name="Kozak C.A."/>
            <person name="Polymeropoulos M.H."/>
            <person name="Horowits R."/>
        </authorList>
    </citation>
    <scope>NUCLEOTIDE SEQUENCE [GENOMIC DNA] OF 1004-1080 (ISOFORM 1)</scope>
</reference>
<reference evidence="16 19" key="8">
    <citation type="submission" date="2002-07" db="EMBL/GenBank/DDBJ databases">
        <title>Cloning and characterization of a novel human gene encoding a protein of 394 amino acids with significant motif of nebulin signature IV and nebulin repeat.</title>
        <authorList>
            <person name="Zhang D.L."/>
            <person name="Cai J.J."/>
            <person name="Ma D.L."/>
        </authorList>
    </citation>
    <scope>NUCLEOTIDE SEQUENCE [MRNA] OF 1314-1730 (ISOFORM 1)</scope>
</reference>
<reference key="9">
    <citation type="journal article" date="2004" name="Cell Tissue Res.">
        <title>Decreased interactions of mutant muscle LIM protein (MLP) with N-RAP and alpha-actinin and their implication for hypertrophic cardiomyopathy.</title>
        <authorList>
            <person name="Gehmlich K."/>
            <person name="Geier C."/>
            <person name="Osterziel K.J."/>
            <person name="Van der Ven P.F."/>
            <person name="Fuerst D.O."/>
        </authorList>
    </citation>
    <scope>INTERACTION WITH CSRP3</scope>
</reference>
<accession>Q86VF7</accession>
<accession>O15500</accession>
<accession>Q5VWI3</accession>
<accession>Q5VWI4</accession>
<accession>Q6MZK3</accession>
<accession>Q6N026</accession>
<accession>Q6N059</accession>
<accession>Q6NSH8</accession>
<accession>Q6PDB0</accession>
<accession>Q719H6</accession>
<accession>Q86TC5</accession>
<accession>Q86TD6</accession>
<accession>Q86TE6</accession>
<accession>Q86VF6</accession>
<accession>Q8N3R6</accession>
<accession>Q8N8F9</accession>
<accession>Q8TCH0</accession>
<accession>Q96MG4</accession>
<evidence type="ECO:0000250" key="1"/>
<evidence type="ECO:0000250" key="2">
    <source>
        <dbReference type="UniProtKB" id="Q80XB4"/>
    </source>
</evidence>
<evidence type="ECO:0000255" key="3"/>
<evidence type="ECO:0000255" key="4">
    <source>
        <dbReference type="PROSITE-ProRule" id="PRU00125"/>
    </source>
</evidence>
<evidence type="ECO:0000256" key="5">
    <source>
        <dbReference type="SAM" id="MobiDB-lite"/>
    </source>
</evidence>
<evidence type="ECO:0000269" key="6">
    <source>
    </source>
</evidence>
<evidence type="ECO:0000269" key="7">
    <source>
    </source>
</evidence>
<evidence type="ECO:0000269" key="8">
    <source>
    </source>
</evidence>
<evidence type="ECO:0000269" key="9">
    <source>
    </source>
</evidence>
<evidence type="ECO:0000269" key="10">
    <source>
    </source>
</evidence>
<evidence type="ECO:0000269" key="11">
    <source>
    </source>
</evidence>
<evidence type="ECO:0000269" key="12">
    <source ref="2"/>
</evidence>
<evidence type="ECO:0000303" key="13">
    <source>
    </source>
</evidence>
<evidence type="ECO:0000303" key="14">
    <source>
    </source>
</evidence>
<evidence type="ECO:0000303" key="15">
    <source ref="2"/>
</evidence>
<evidence type="ECO:0000305" key="16"/>
<evidence type="ECO:0000312" key="17">
    <source>
        <dbReference type="EMBL" id="AAC51786.1"/>
    </source>
</evidence>
<evidence type="ECO:0000312" key="18">
    <source>
        <dbReference type="EMBL" id="AAH70130.1"/>
    </source>
</evidence>
<evidence type="ECO:0000312" key="19">
    <source>
        <dbReference type="EMBL" id="AAL99185.2"/>
    </source>
</evidence>
<evidence type="ECO:0000312" key="20">
    <source>
        <dbReference type="EMBL" id="AAO47073.1"/>
    </source>
</evidence>
<evidence type="ECO:0000312" key="21">
    <source>
        <dbReference type="EMBL" id="AL390197"/>
    </source>
</evidence>
<evidence type="ECO:0000312" key="22">
    <source>
        <dbReference type="EMBL" id="BAB71328.1"/>
    </source>
</evidence>
<evidence type="ECO:0000312" key="23">
    <source>
        <dbReference type="HGNC" id="HGNC:7988"/>
    </source>
</evidence>
<organism>
    <name type="scientific">Homo sapiens</name>
    <name type="common">Human</name>
    <dbReference type="NCBI Taxonomy" id="9606"/>
    <lineage>
        <taxon>Eukaryota</taxon>
        <taxon>Metazoa</taxon>
        <taxon>Chordata</taxon>
        <taxon>Craniata</taxon>
        <taxon>Vertebrata</taxon>
        <taxon>Euteleostomi</taxon>
        <taxon>Mammalia</taxon>
        <taxon>Eutheria</taxon>
        <taxon>Euarchontoglires</taxon>
        <taxon>Primates</taxon>
        <taxon>Haplorrhini</taxon>
        <taxon>Catarrhini</taxon>
        <taxon>Hominidae</taxon>
        <taxon>Homo</taxon>
    </lineage>
</organism>
<comment type="function">
    <text evidence="2">May be involved in anchoring the terminal actin filaments in the myofibril to the membrane and in transmitting tension from the myofibrils to the extracellular matrix.</text>
</comment>
<comment type="subunit">
    <text evidence="1 9">Interacts with actin, alpha-actinin, KLHL41, TLN1 and VCL. Interacts with CSRP3.</text>
</comment>
<comment type="interaction">
    <interactant intactId="EBI-5660292">
        <id>Q86VF7</id>
    </interactant>
    <interactant intactId="EBI-77797">
        <id>P35609</id>
        <label>ACTN2</label>
    </interactant>
    <organismsDiffer>false</organismsDiffer>
    <experiments>2</experiments>
</comment>
<comment type="interaction">
    <interactant intactId="EBI-5660292">
        <id>Q86VF7</id>
    </interactant>
    <interactant intactId="EBI-5658719">
        <id>P50461</id>
        <label>CSRP3</label>
    </interactant>
    <organismsDiffer>false</organismsDiffer>
    <experiments>2</experiments>
</comment>
<comment type="interaction">
    <interactant intactId="EBI-5660292">
        <id>Q86VF7</id>
    </interactant>
    <interactant intactId="EBI-5353084">
        <id>O60662</id>
        <label>KLHL41</label>
    </interactant>
    <organismsDiffer>false</organismsDiffer>
    <experiments>4</experiments>
</comment>
<comment type="subcellular location">
    <text evidence="6">Localized at the myotendinous junction in skeletal muscle and at the intercalated disk in cardiac muscle.</text>
</comment>
<comment type="alternative products">
    <event type="alternative splicing"/>
    <isoform>
        <id>Q86VF7-1</id>
        <name evidence="6">1</name>
        <sequence type="displayed"/>
    </isoform>
    <isoform>
        <id>Q86VF7-2</id>
        <name evidence="8">2</name>
        <sequence type="described" ref="VSP_052166"/>
    </isoform>
    <isoform>
        <id>Q86VF7-3</id>
        <name evidence="8">3</name>
        <sequence type="described" ref="VSP_052165 VSP_052166"/>
    </isoform>
    <isoform>
        <id>Q86VF7-4</id>
        <name evidence="6 12">4</name>
        <sequence type="described" ref="VSP_052165"/>
    </isoform>
</comment>
<comment type="tissue specificity">
    <text evidence="6">Expressed in cardiac and skeletal muscle.</text>
</comment>
<comment type="sequence caution" evidence="16">
    <conflict type="miscellaneous discrepancy">
        <sequence resource="EMBL-CDS" id="AAH58825"/>
    </conflict>
    <text>Contaminating sequence. Potential poly-A sequence.</text>
</comment>
<comment type="sequence caution" evidence="16">
    <conflict type="miscellaneous discrepancy">
        <sequence resource="EMBL-CDS" id="AAH70130"/>
    </conflict>
    <text>Contaminating sequence. Potential poly-A sequence.</text>
</comment>
<comment type="sequence caution" evidence="16">
    <conflict type="erroneous initiation">
        <sequence resource="EMBL-CDS" id="AAQ09536"/>
    </conflict>
</comment>
<comment type="sequence caution" evidence="16">
    <conflict type="erroneous initiation">
        <sequence resource="EMBL-CDS" id="BAC04884"/>
    </conflict>
</comment>
<keyword id="KW-0009">Actin-binding</keyword>
<keyword id="KW-0025">Alternative splicing</keyword>
<keyword id="KW-0440">LIM domain</keyword>
<keyword id="KW-0479">Metal-binding</keyword>
<keyword id="KW-0597">Phosphoprotein</keyword>
<keyword id="KW-1267">Proteomics identification</keyword>
<keyword id="KW-1185">Reference proteome</keyword>
<keyword id="KW-0677">Repeat</keyword>
<keyword id="KW-0862">Zinc</keyword>
<sequence length="1730" mass="197074">MNVQPCSRCGYGVYPAEKISCIDQIWHKACFHCEVCKMMLSVNNFVSHQKKPYCHAHNPKNNTFTSVYHTPLNLNVRTFPEAISGIHDQEDGEQCKSVFHWDMKSKDKEGAPNRQPLANERAYWTGYGEGNAWCPGALPDPEIVRMVEARKSLGEEYTEDYEQPRGKGSFPAMITPAYQRAKKANQLASQVEYKRGHDERISRFSTVVDTPELLRSKAGAQLQSDVRYTEDYEQQRGKGSFPAMITPAYQIAKRANELASDVRYHQQYQKEMRGMAGPAIGAEGILTRECADQYGQGYPEEYEEHRGKGSFPAMITPAYQNAKKAHELASDIKYRQDFNKMKGAAHYHSLPAQDNLVLKQAQSVNKLVSEVEYKKDLESSRGHSINYCETPQFRNVSKISKFTSDNKYKENYQNHMRGRYEGVGMDRRTLHAMKVGSLASNVAYKADYKHDIVDYNYPATLTPSYQTAMKLVPLKDANYRQSIDKLKYSSVTDTPQIVQAKINAQQLSHVNYRADYEKNKLNYTLPQDVPQLVKAKTNAKLFSEVKYKEGWEKTKGKGFEMKLDAMSLLAAKASGELASNIKYKEEYEKTKGKAMGTADSRLLHSLQIAKMSSEVEYKKGFEESKTRFHLPMDMVNIRHAKKAQTLASDLDYRKKLHEYTVLPEDMKTQWAKKAYGLQSELQYKADLAWMKGVGWLTEGSLNLEQAKKAGQLVSEKNYRQRVDELKFTSVTDSSQMEHAKKSQELQSGVAYKAGNEQSVHQYTISKDEPLFLQARANAANLSEKLYKSSWENQKAKGFELRLDSLTFLAAKAKRDLASEVKYKEDYERSRGKLIGAKDVQGDSQMSHSLQMSKLQSELEYKKGFEDTKSQCHVSLDMVHLVHARKAQHLATDVGYKTAEHHFTALPTDMKVEWAKKAYGLQSDNQYRADVKWMKGMGWVATGSLNVEQAKKAGELISEKKYRQHPDALKFTSIKDTPEMVQARISYTQAVDRLYREQGENIKHHYTPTADLPEVLLAKLNAMNISETRYKESWSKLRDGGYKLRLDALPFQAAKASGEIISDYKYKEAFEKMKGQMLGSRSLEDDISLAHSVYATSLQSDVNYKKGFEHSKAQFHLPLDMAALVHAKKAQTLASNQDYKHPLPQYTSLAEDLRLSCAKKAHKLQSENLYRSDLNFMRGVACVIPGTLEIEGRKKASELISESKYRQHPHSFKYTAVTDTPNLLHAKFSNQITNERLYKAAGEDARHEYTMTLGLPEFIRAKTNAANLSDARYKESWRNLRAQGYKLTIEALPFQAARASGDIASDFLYRHDFVKERGKLIGPQSVRDDPRIQHCRRMGQLQSELQYRRGATSSQAQFHLPMDMVHLVHAKNAQALASDHDYRTQYHKFTALPEDLKMAWAKKAHALQSELRYKSDLIGMKGIGWLALRSPQMESAKKAGELISETKYRKKPDSIKFTTVVDSPDLVHAKNSYMHCNERMYRSGDAESLHRYTLIPDHPDFTRARLNALHLSDKVYRNSWEQTRAGSYDFRLDAIPFQTARASREIASDFRYKEAFLRDRGLQIGYRSVDDDPRMKHFLNVGRLQSDNEYKKDFAKSRSQFHSSTDQPGLLQAKRSQQLASDVHYRQPLPQPTCDPEQLGLRHAQKAHQLQSDVKYKSDLNLTRGVGWTPPGSYKVEMARRAAELANARGLGLQGAYRGAEAVEAGDHQSGEVNPDATEILHVKKKKALLL</sequence>
<name>NRAP_HUMAN</name>
<dbReference type="EMBL" id="AY177620">
    <property type="protein sequence ID" value="AAO47073.1"/>
    <property type="molecule type" value="mRNA"/>
</dbReference>
<dbReference type="EMBL" id="AY177621">
    <property type="protein sequence ID" value="AAO47074.1"/>
    <property type="molecule type" value="mRNA"/>
</dbReference>
<dbReference type="EMBL" id="AY081943">
    <property type="protein sequence ID" value="AAL99185.2"/>
    <property type="molecule type" value="mRNA"/>
</dbReference>
<dbReference type="EMBL" id="AL831980">
    <property type="protein sequence ID" value="CAD89899.1"/>
    <property type="molecule type" value="mRNA"/>
</dbReference>
<dbReference type="EMBL" id="AL832025">
    <property type="protein sequence ID" value="CAD89910.1"/>
    <property type="molecule type" value="mRNA"/>
</dbReference>
<dbReference type="EMBL" id="AL832330">
    <property type="protein sequence ID" value="CAD38623.1"/>
    <property type="molecule type" value="mRNA"/>
</dbReference>
<dbReference type="EMBL" id="AL832457">
    <property type="protein sequence ID" value="CAD89998.1"/>
    <property type="molecule type" value="mRNA"/>
</dbReference>
<dbReference type="EMBL" id="BX640682">
    <property type="protein sequence ID" value="CAE45811.1"/>
    <property type="molecule type" value="mRNA"/>
</dbReference>
<dbReference type="EMBL" id="BX640730">
    <property type="protein sequence ID" value="CAE45846.1"/>
    <property type="molecule type" value="mRNA"/>
</dbReference>
<dbReference type="EMBL" id="BX641052">
    <property type="protein sequence ID" value="CAE46027.1"/>
    <property type="molecule type" value="mRNA"/>
</dbReference>
<dbReference type="EMBL" id="AL390197">
    <property type="status" value="NOT_ANNOTATED_CDS"/>
    <property type="molecule type" value="Genomic_DNA"/>
</dbReference>
<dbReference type="EMBL" id="AK056969">
    <property type="protein sequence ID" value="BAB71328.1"/>
    <property type="molecule type" value="mRNA"/>
</dbReference>
<dbReference type="EMBL" id="AK096886">
    <property type="protein sequence ID" value="BAC04884.1"/>
    <property type="status" value="ALT_INIT"/>
    <property type="molecule type" value="mRNA"/>
</dbReference>
<dbReference type="EMBL" id="BC058825">
    <property type="protein sequence ID" value="AAH58825.1"/>
    <property type="status" value="ALT_SEQ"/>
    <property type="molecule type" value="mRNA"/>
</dbReference>
<dbReference type="EMBL" id="BC070130">
    <property type="protein sequence ID" value="AAH70130.1"/>
    <property type="status" value="ALT_SEQ"/>
    <property type="molecule type" value="mRNA"/>
</dbReference>
<dbReference type="EMBL" id="U96486">
    <property type="protein sequence ID" value="AAC51786.1"/>
    <property type="molecule type" value="Genomic_DNA"/>
</dbReference>
<dbReference type="EMBL" id="AF542553">
    <property type="protein sequence ID" value="AAQ09536.1"/>
    <property type="status" value="ALT_INIT"/>
    <property type="molecule type" value="mRNA"/>
</dbReference>
<dbReference type="CCDS" id="CCDS7578.1">
    <molecule id="Q86VF7-4"/>
</dbReference>
<dbReference type="CCDS" id="CCDS7579.1">
    <molecule id="Q86VF7-1"/>
</dbReference>
<dbReference type="RefSeq" id="NP_001248392.1">
    <property type="nucleotide sequence ID" value="NM_001261463.1"/>
</dbReference>
<dbReference type="RefSeq" id="NP_006166.3">
    <molecule id="Q86VF7-4"/>
    <property type="nucleotide sequence ID" value="NM_006175.4"/>
</dbReference>
<dbReference type="RefSeq" id="NP_932326.2">
    <molecule id="Q86VF7-1"/>
    <property type="nucleotide sequence ID" value="NM_198060.3"/>
</dbReference>
<dbReference type="SMR" id="Q86VF7"/>
<dbReference type="BioGRID" id="110951">
    <property type="interactions" value="10"/>
</dbReference>
<dbReference type="FunCoup" id="Q86VF7">
    <property type="interactions" value="6"/>
</dbReference>
<dbReference type="IntAct" id="Q86VF7">
    <property type="interactions" value="4"/>
</dbReference>
<dbReference type="STRING" id="9606.ENSP00000358365"/>
<dbReference type="GlyGen" id="Q86VF7">
    <property type="glycosylation" value="4 sites, 1 O-linked glycan (3 sites)"/>
</dbReference>
<dbReference type="iPTMnet" id="Q86VF7"/>
<dbReference type="PhosphoSitePlus" id="Q86VF7"/>
<dbReference type="SwissPalm" id="Q86VF7"/>
<dbReference type="BioMuta" id="NRAP"/>
<dbReference type="DMDM" id="115502505"/>
<dbReference type="jPOST" id="Q86VF7"/>
<dbReference type="MassIVE" id="Q86VF7"/>
<dbReference type="PaxDb" id="9606-ENSP00000358365"/>
<dbReference type="PeptideAtlas" id="Q86VF7"/>
<dbReference type="ProteomicsDB" id="70004">
    <molecule id="Q86VF7-1"/>
</dbReference>
<dbReference type="ProteomicsDB" id="70005">
    <molecule id="Q86VF7-2"/>
</dbReference>
<dbReference type="ProteomicsDB" id="70006">
    <molecule id="Q86VF7-3"/>
</dbReference>
<dbReference type="ProteomicsDB" id="70007">
    <molecule id="Q86VF7-4"/>
</dbReference>
<dbReference type="Antibodypedia" id="51692">
    <property type="antibodies" value="73 antibodies from 18 providers"/>
</dbReference>
<dbReference type="DNASU" id="4892"/>
<dbReference type="Ensembl" id="ENST00000359988.4">
    <molecule id="Q86VF7-1"/>
    <property type="protein sequence ID" value="ENSP00000353078.3"/>
    <property type="gene ID" value="ENSG00000197893.14"/>
</dbReference>
<dbReference type="Ensembl" id="ENST00000360478.7">
    <molecule id="Q86VF7-4"/>
    <property type="protein sequence ID" value="ENSP00000353666.3"/>
    <property type="gene ID" value="ENSG00000197893.14"/>
</dbReference>
<dbReference type="Ensembl" id="ENST00000369360.7">
    <molecule id="Q86VF7-3"/>
    <property type="protein sequence ID" value="ENSP00000358367.3"/>
    <property type="gene ID" value="ENSG00000197893.14"/>
</dbReference>
<dbReference type="GeneID" id="4892"/>
<dbReference type="KEGG" id="hsa:4892"/>
<dbReference type="MANE-Select" id="ENST00000359988.4">
    <property type="protein sequence ID" value="ENSP00000353078.3"/>
    <property type="RefSeq nucleotide sequence ID" value="NM_198060.4"/>
    <property type="RefSeq protein sequence ID" value="NP_932326.2"/>
</dbReference>
<dbReference type="UCSC" id="uc001laj.5">
    <molecule id="Q86VF7-1"/>
    <property type="organism name" value="human"/>
</dbReference>
<dbReference type="AGR" id="HGNC:7988"/>
<dbReference type="CTD" id="4892"/>
<dbReference type="DisGeNET" id="4892"/>
<dbReference type="GeneCards" id="NRAP"/>
<dbReference type="HGNC" id="HGNC:7988">
    <property type="gene designation" value="NRAP"/>
</dbReference>
<dbReference type="HPA" id="ENSG00000197893">
    <property type="expression patterns" value="Group enriched (skeletal muscle, tongue)"/>
</dbReference>
<dbReference type="MalaCards" id="NRAP"/>
<dbReference type="MIM" id="602873">
    <property type="type" value="gene"/>
</dbReference>
<dbReference type="neXtProt" id="NX_Q86VF7"/>
<dbReference type="OpenTargets" id="ENSG00000197893"/>
<dbReference type="PharmGKB" id="PA31767"/>
<dbReference type="VEuPathDB" id="HostDB:ENSG00000197893"/>
<dbReference type="eggNOG" id="KOG1702">
    <property type="taxonomic scope" value="Eukaryota"/>
</dbReference>
<dbReference type="GeneTree" id="ENSGT00940000158418"/>
<dbReference type="HOGENOM" id="CLU_003010_1_0_1"/>
<dbReference type="InParanoid" id="Q86VF7"/>
<dbReference type="OMA" id="NERPYWT"/>
<dbReference type="OrthoDB" id="9295290at2759"/>
<dbReference type="PAN-GO" id="Q86VF7">
    <property type="GO annotations" value="3 GO annotations based on evolutionary models"/>
</dbReference>
<dbReference type="PhylomeDB" id="Q86VF7"/>
<dbReference type="TreeFam" id="TF313758"/>
<dbReference type="PathwayCommons" id="Q86VF7"/>
<dbReference type="SignaLink" id="Q86VF7"/>
<dbReference type="BioGRID-ORCS" id="4892">
    <property type="hits" value="13 hits in 1146 CRISPR screens"/>
</dbReference>
<dbReference type="ChiTaRS" id="NRAP">
    <property type="organism name" value="human"/>
</dbReference>
<dbReference type="GeneWiki" id="NRAP"/>
<dbReference type="GenomeRNAi" id="4892"/>
<dbReference type="Pharos" id="Q86VF7">
    <property type="development level" value="Tbio"/>
</dbReference>
<dbReference type="PRO" id="PR:Q86VF7"/>
<dbReference type="Proteomes" id="UP000005640">
    <property type="component" value="Chromosome 10"/>
</dbReference>
<dbReference type="RNAct" id="Q86VF7">
    <property type="molecule type" value="protein"/>
</dbReference>
<dbReference type="Bgee" id="ENSG00000197893">
    <property type="expression patterns" value="Expressed in skeletal muscle tissue of rectus abdominis and 106 other cell types or tissues"/>
</dbReference>
<dbReference type="ExpressionAtlas" id="Q86VF7">
    <property type="expression patterns" value="baseline and differential"/>
</dbReference>
<dbReference type="GO" id="GO:0005916">
    <property type="term" value="C:fascia adherens"/>
    <property type="evidence" value="ECO:0000250"/>
    <property type="project" value="UniProtKB"/>
</dbReference>
<dbReference type="GO" id="GO:0005927">
    <property type="term" value="C:muscle tendon junction"/>
    <property type="evidence" value="ECO:0000250"/>
    <property type="project" value="UniProtKB"/>
</dbReference>
<dbReference type="GO" id="GO:0030018">
    <property type="term" value="C:Z disc"/>
    <property type="evidence" value="ECO:0000318"/>
    <property type="project" value="GO_Central"/>
</dbReference>
<dbReference type="GO" id="GO:0003779">
    <property type="term" value="F:actin binding"/>
    <property type="evidence" value="ECO:0000250"/>
    <property type="project" value="UniProtKB"/>
</dbReference>
<dbReference type="GO" id="GO:0051015">
    <property type="term" value="F:actin filament binding"/>
    <property type="evidence" value="ECO:0000318"/>
    <property type="project" value="GO_Central"/>
</dbReference>
<dbReference type="GO" id="GO:0046872">
    <property type="term" value="F:metal ion binding"/>
    <property type="evidence" value="ECO:0007669"/>
    <property type="project" value="UniProtKB-KW"/>
</dbReference>
<dbReference type="GO" id="GO:0051371">
    <property type="term" value="F:muscle alpha-actinin binding"/>
    <property type="evidence" value="ECO:0000250"/>
    <property type="project" value="UniProtKB"/>
</dbReference>
<dbReference type="GO" id="GO:0017166">
    <property type="term" value="F:vinculin binding"/>
    <property type="evidence" value="ECO:0007669"/>
    <property type="project" value="Ensembl"/>
</dbReference>
<dbReference type="GO" id="GO:0071691">
    <property type="term" value="P:cardiac muscle thin filament assembly"/>
    <property type="evidence" value="ECO:0000318"/>
    <property type="project" value="GO_Central"/>
</dbReference>
<dbReference type="CDD" id="cd09446">
    <property type="entry name" value="LIM_N_RAP"/>
    <property type="match status" value="1"/>
</dbReference>
<dbReference type="FunFam" id="2.10.110.10:FF:000071">
    <property type="entry name" value="nebulin-related-anchoring protein isoform X1"/>
    <property type="match status" value="1"/>
</dbReference>
<dbReference type="Gene3D" id="2.10.110.10">
    <property type="entry name" value="Cysteine Rich Protein"/>
    <property type="match status" value="1"/>
</dbReference>
<dbReference type="InterPro" id="IPR055297">
    <property type="entry name" value="NEBU/NEBL"/>
</dbReference>
<dbReference type="InterPro" id="IPR013998">
    <property type="entry name" value="Nebulin-like"/>
</dbReference>
<dbReference type="InterPro" id="IPR000900">
    <property type="entry name" value="Nebulin_repeat"/>
</dbReference>
<dbReference type="InterPro" id="IPR001781">
    <property type="entry name" value="Znf_LIM"/>
</dbReference>
<dbReference type="PANTHER" id="PTHR11039">
    <property type="entry name" value="NEBULIN"/>
    <property type="match status" value="1"/>
</dbReference>
<dbReference type="PANTHER" id="PTHR11039:SF39">
    <property type="entry name" value="NEBULIN-RELATED-ANCHORING PROTEIN"/>
    <property type="match status" value="1"/>
</dbReference>
<dbReference type="Pfam" id="PF00412">
    <property type="entry name" value="LIM"/>
    <property type="match status" value="1"/>
</dbReference>
<dbReference type="Pfam" id="PF00880">
    <property type="entry name" value="Nebulin"/>
    <property type="match status" value="19"/>
</dbReference>
<dbReference type="PRINTS" id="PR00510">
    <property type="entry name" value="NEBULIN"/>
</dbReference>
<dbReference type="SMART" id="SM00132">
    <property type="entry name" value="LIM"/>
    <property type="match status" value="1"/>
</dbReference>
<dbReference type="SMART" id="SM00227">
    <property type="entry name" value="NEBU"/>
    <property type="match status" value="41"/>
</dbReference>
<dbReference type="SUPFAM" id="SSF57716">
    <property type="entry name" value="Glucocorticoid receptor-like (DNA-binding domain)"/>
    <property type="match status" value="1"/>
</dbReference>
<dbReference type="PROSITE" id="PS00478">
    <property type="entry name" value="LIM_DOMAIN_1"/>
    <property type="match status" value="1"/>
</dbReference>
<dbReference type="PROSITE" id="PS50023">
    <property type="entry name" value="LIM_DOMAIN_2"/>
    <property type="match status" value="1"/>
</dbReference>
<dbReference type="PROSITE" id="PS51216">
    <property type="entry name" value="NEBULIN"/>
    <property type="match status" value="44"/>
</dbReference>
<proteinExistence type="evidence at protein level"/>
<feature type="chain" id="PRO_0000250425" description="Nebulin-related-anchoring protein">
    <location>
        <begin position="1"/>
        <end position="1730"/>
    </location>
</feature>
<feature type="domain" description="LIM zinc-binding" evidence="4">
    <location>
        <begin position="4"/>
        <end position="64"/>
    </location>
</feature>
<feature type="repeat" description="Nebulin 1" evidence="3">
    <location>
        <begin position="63"/>
        <end position="97"/>
    </location>
</feature>
<feature type="repeat" description="Nebulin 2" evidence="3">
    <location>
        <begin position="156"/>
        <end position="166"/>
    </location>
</feature>
<feature type="repeat" description="Nebulin 3" evidence="3">
    <location>
        <begin position="175"/>
        <end position="202"/>
    </location>
</feature>
<feature type="repeat" description="Nebulin 4" evidence="3">
    <location>
        <begin position="203"/>
        <end position="237"/>
    </location>
</feature>
<feature type="repeat" description="Nebulin 5" evidence="3">
    <location>
        <begin position="246"/>
        <end position="273"/>
    </location>
</feature>
<feature type="repeat" description="Nebulin 6" evidence="3">
    <location>
        <begin position="298"/>
        <end position="307"/>
    </location>
</feature>
<feature type="repeat" description="Nebulin 7" evidence="3">
    <location>
        <begin position="316"/>
        <end position="343"/>
    </location>
</feature>
<feature type="repeat" description="Nebulin 8" evidence="3">
    <location>
        <begin position="348"/>
        <end position="382"/>
    </location>
</feature>
<feature type="repeat" description="Nebulin 9" evidence="3">
    <location>
        <begin position="389"/>
        <end position="417"/>
    </location>
</feature>
<feature type="repeat" description="Nebulin 10" evidence="3">
    <location>
        <begin position="419"/>
        <end position="453"/>
    </location>
</feature>
<feature type="repeat" description="Nebulin 11" evidence="3">
    <location>
        <begin position="487"/>
        <end position="521"/>
    </location>
</feature>
<feature type="repeat" description="Nebulin 12" evidence="3">
    <location>
        <begin position="522"/>
        <end position="556"/>
    </location>
</feature>
<feature type="repeat" description="Nebulin 13" evidence="3">
    <location>
        <begin position="558"/>
        <end position="592"/>
    </location>
</feature>
<feature type="repeat" description="Nebulin 14" evidence="3">
    <location>
        <begin position="602"/>
        <end position="626"/>
    </location>
</feature>
<feature type="repeat" description="Nebulin 15" evidence="3">
    <location>
        <begin position="627"/>
        <end position="661"/>
    </location>
</feature>
<feature type="repeat" description="Nebulin 16" evidence="3">
    <location>
        <begin position="662"/>
        <end position="692"/>
    </location>
</feature>
<feature type="repeat" description="Nebulin 17" evidence="3">
    <location>
        <begin position="702"/>
        <end position="724"/>
    </location>
</feature>
<feature type="repeat" description="Nebulin 18" evidence="3">
    <location>
        <begin position="726"/>
        <end position="760"/>
    </location>
</feature>
<feature type="repeat" description="Nebulin 19" evidence="3">
    <location>
        <begin position="761"/>
        <end position="795"/>
    </location>
</feature>
<feature type="repeat" description="Nebulin 20" evidence="3">
    <location>
        <begin position="797"/>
        <end position="831"/>
    </location>
</feature>
<feature type="repeat" description="Nebulin 21" evidence="3">
    <location>
        <begin position="844"/>
        <end position="869"/>
    </location>
</feature>
<feature type="repeat" description="Nebulin 22" evidence="3">
    <location>
        <begin position="870"/>
        <end position="896"/>
    </location>
</feature>
<feature type="repeat" description="Nebulin 23" evidence="3">
    <location>
        <begin position="901"/>
        <end position="935"/>
    </location>
</feature>
<feature type="repeat" description="Nebulin 24" evidence="3">
    <location>
        <begin position="945"/>
        <end position="963"/>
    </location>
</feature>
<feature type="repeat" description="Nebulin 25" evidence="3">
    <location>
        <begin position="969"/>
        <end position="1003"/>
    </location>
</feature>
<feature type="repeat" description="Nebulin 26" evidence="3">
    <location>
        <begin position="1004"/>
        <end position="1038"/>
    </location>
</feature>
<feature type="repeat" description="Nebulin 27" evidence="3">
    <location>
        <begin position="1040"/>
        <end position="1074"/>
    </location>
</feature>
<feature type="repeat" description="Nebulin 28" evidence="3">
    <location>
        <begin position="1078"/>
        <end position="1112"/>
    </location>
</feature>
<feature type="repeat" description="Nebulin 29" evidence="3">
    <location>
        <begin position="1113"/>
        <end position="1139"/>
    </location>
</feature>
<feature type="repeat" description="Nebulin 30" evidence="3">
    <location>
        <begin position="1144"/>
        <end position="1178"/>
    </location>
</feature>
<feature type="repeat" description="Nebulin 31" evidence="3">
    <location>
        <begin position="1183"/>
        <end position="1206"/>
    </location>
</feature>
<feature type="repeat" description="Nebulin 32" evidence="3">
    <location>
        <begin position="1212"/>
        <end position="1246"/>
    </location>
</feature>
<feature type="repeat" description="Nebulin 33" evidence="3">
    <location>
        <begin position="1247"/>
        <end position="1281"/>
    </location>
</feature>
<feature type="repeat" description="Nebulin 34" evidence="3">
    <location>
        <begin position="1283"/>
        <end position="1317"/>
    </location>
</feature>
<feature type="repeat" description="Nebulin 35" evidence="3">
    <location>
        <begin position="1321"/>
        <end position="1355"/>
    </location>
</feature>
<feature type="repeat" description="Nebulin 36" evidence="3">
    <location>
        <begin position="1356"/>
        <end position="1390"/>
    </location>
</feature>
<feature type="repeat" description="Nebulin 37" evidence="3">
    <location>
        <begin position="1391"/>
        <end position="1421"/>
    </location>
</feature>
<feature type="repeat" description="Nebulin 38" evidence="3">
    <location>
        <begin position="1429"/>
        <end position="1449"/>
    </location>
</feature>
<feature type="repeat" description="Nebulin 39" evidence="3">
    <location>
        <begin position="1455"/>
        <end position="1481"/>
    </location>
</feature>
<feature type="repeat" description="Nebulin 40" evidence="3">
    <location>
        <begin position="1490"/>
        <end position="1524"/>
    </location>
</feature>
<feature type="repeat" description="Nebulin 41" evidence="3">
    <location>
        <begin position="1526"/>
        <end position="1560"/>
    </location>
</feature>
<feature type="repeat" description="Nebulin 42" evidence="3">
    <location>
        <begin position="1564"/>
        <end position="1598"/>
    </location>
</feature>
<feature type="repeat" description="Nebulin 43" evidence="3">
    <location>
        <begin position="1599"/>
        <end position="1626"/>
    </location>
</feature>
<feature type="repeat" description="Nebulin 44" evidence="3">
    <location>
        <begin position="1640"/>
        <end position="1664"/>
    </location>
</feature>
<feature type="region of interest" description="Disordered" evidence="5">
    <location>
        <begin position="1595"/>
        <end position="1620"/>
    </location>
</feature>
<feature type="compositionally biased region" description="Polar residues" evidence="5">
    <location>
        <begin position="1596"/>
        <end position="1606"/>
    </location>
</feature>
<feature type="modified residue" description="Phosphoserine" evidence="2">
    <location>
        <position position="1081"/>
    </location>
</feature>
<feature type="splice variant" id="VSP_052165" description="In isoform 3 and isoform 4." evidence="13 14 15">
    <location>
        <begin position="371"/>
        <end position="405"/>
    </location>
</feature>
<feature type="splice variant" id="VSP_052166" description="In isoform 2 and isoform 3." evidence="14">
    <original>N</original>
    <variation>NVHLLLSLK</variation>
    <location>
        <position position="580"/>
    </location>
</feature>
<feature type="sequence variant" id="VAR_034073" description="In dbSNP:rs34700024.">
    <original>A</original>
    <variation>S</variation>
    <location>
        <position position="132"/>
    </location>
</feature>
<feature type="sequence variant" id="VAR_034074" description="In dbSNP:rs35049661.">
    <original>Q</original>
    <variation>E</variation>
    <location>
        <position position="186"/>
    </location>
</feature>
<feature type="sequence variant" id="VAR_027556" description="In dbSNP:rs2154028." evidence="7 10 11 12">
    <original>V</original>
    <variation>A</variation>
    <location>
        <position position="208"/>
    </location>
</feature>
<feature type="sequence variant" id="VAR_027557" description="In dbSNP:rs2185913." evidence="11">
    <original>Y</original>
    <variation>C</variation>
    <location>
        <position position="249"/>
    </location>
</feature>
<feature type="sequence variant" id="VAR_034075" description="In dbSNP:rs2275799.">
    <original>A</original>
    <variation>T</variation>
    <location>
        <position position="282"/>
    </location>
</feature>
<feature type="sequence variant" id="VAR_027558" description="In dbSNP:rs3121478." evidence="7 11 12">
    <original>A</original>
    <variation>T</variation>
    <location>
        <position position="344"/>
    </location>
</feature>
<feature type="sequence variant" id="VAR_027559" description="In dbSNP:rs3127106." evidence="7 11 12">
    <original>Q</original>
    <variation>R</variation>
    <location>
        <position position="360"/>
    </location>
</feature>
<feature type="sequence variant" id="VAR_050160" description="In dbSNP:rs11196400.">
    <original>D</original>
    <variation>N</variation>
    <location>
        <position position="484"/>
    </location>
</feature>
<feature type="sequence variant" id="VAR_034076" description="In dbSNP:rs3189030." evidence="8 11">
    <original>S</original>
    <variation>L</variation>
    <location>
        <position position="490"/>
    </location>
</feature>
<feature type="sequence variant" id="VAR_034077" description="In dbSNP:rs2270182.">
    <original>N</original>
    <variation>I</variation>
    <location>
        <position position="519"/>
    </location>
</feature>
<feature type="sequence variant" id="VAR_050161" description="In dbSNP:rs2286734.">
    <original>A</original>
    <variation>S</variation>
    <location>
        <position position="647"/>
    </location>
</feature>
<feature type="sequence variant" id="VAR_034078" description="In dbSNP:rs2286735." evidence="12">
    <original>A</original>
    <variation>V</variation>
    <location>
        <position position="674"/>
    </location>
</feature>
<feature type="sequence variant" id="VAR_034079" description="In dbSNP:rs868738." evidence="11">
    <original>R</original>
    <variation>C</variation>
    <location>
        <position position="884"/>
    </location>
</feature>
<feature type="sequence variant" id="VAR_061357" description="In dbSNP:rs34523503.">
    <original>M</original>
    <variation>V</variation>
    <location>
        <position position="1022"/>
    </location>
</feature>
<feature type="sequence variant" id="VAR_034080" description="In dbSNP:rs1539587." evidence="11">
    <original>A</original>
    <variation>V</variation>
    <location>
        <position position="1112"/>
    </location>
</feature>
<feature type="sequence variant" id="VAR_050162" description="In dbSNP:rs10749138." evidence="6 11">
    <original>I</original>
    <variation>V</variation>
    <location>
        <position position="1183"/>
    </location>
</feature>
<feature type="sequence variant" id="VAR_027560" description="In dbSNP:rs11196389." evidence="11">
    <original>L</original>
    <variation>P</variation>
    <location>
        <position position="1531"/>
    </location>
</feature>
<feature type="sequence variant" id="VAR_050163" description="In dbSNP:rs1885434." evidence="11">
    <original>R</original>
    <variation>C</variation>
    <location>
        <position position="1566"/>
    </location>
</feature>
<feature type="sequence variant" id="VAR_050164" description="In dbSNP:rs11575798.">
    <original>D</original>
    <variation>N</variation>
    <location>
        <position position="1569"/>
    </location>
</feature>
<feature type="sequence variant" id="VAR_050165" description="In dbSNP:rs11575797.">
    <original>A</original>
    <variation>S</variation>
    <location>
        <position position="1643"/>
    </location>
</feature>
<feature type="sequence conflict" description="In Ref. 3; CAD38623." evidence="16" ref="3">
    <original>S</original>
    <variation>N</variation>
    <location>
        <position position="224"/>
    </location>
</feature>
<feature type="sequence conflict" description="In Ref. 3; CAD89910." evidence="16" ref="3">
    <original>D</original>
    <variation>G</variation>
    <location>
        <position position="261"/>
    </location>
</feature>
<feature type="sequence conflict" description="In Ref. 3; CAE45846." evidence="16" ref="3">
    <original>F</original>
    <variation>S</variation>
    <location>
        <position position="338"/>
    </location>
</feature>
<feature type="sequence conflict" description="In Ref. 3; CAD38623." evidence="16" ref="3">
    <original>N</original>
    <variation>D</variation>
    <location>
        <position position="395"/>
    </location>
</feature>
<feature type="sequence conflict" description="In Ref. 3; CAE45811." evidence="16" ref="3">
    <original>Y</original>
    <variation>H</variation>
    <location>
        <position position="488"/>
    </location>
</feature>
<feature type="sequence conflict" description="In Ref. 5; BAB71328." evidence="16" ref="5">
    <original>V</original>
    <variation>A</variation>
    <location>
        <position position="545"/>
    </location>
</feature>
<feature type="sequence conflict" description="In Ref. 3; CAD89910." evidence="16" ref="3">
    <original>E</original>
    <variation>G</variation>
    <location>
        <position position="658"/>
    </location>
</feature>
<feature type="sequence conflict" description="In Ref. 3; CAD89910/CAE45846." evidence="16" ref="3">
    <original>K</original>
    <variation>E</variation>
    <location>
        <position position="862"/>
    </location>
</feature>
<feature type="sequence conflict" description="In Ref. 3; CAE45846." evidence="16" ref="3">
    <original>S</original>
    <variation>P</variation>
    <location>
        <position position="1210"/>
    </location>
</feature>
<feature type="sequence conflict" description="In Ref. 3; CAD89910." evidence="16" ref="3">
    <original>L</original>
    <variation>F</variation>
    <location>
        <position position="1236"/>
    </location>
</feature>
<feature type="sequence conflict" description="In Ref. 3; CAE45846." evidence="16" ref="3">
    <original>A</original>
    <variation>V</variation>
    <location>
        <position position="1260"/>
    </location>
</feature>
<feature type="sequence conflict" description="In Ref. 3; CAE45846." evidence="16" ref="3">
    <original>R</original>
    <variation>K</variation>
    <location>
        <position position="1348"/>
    </location>
</feature>
<feature type="sequence conflict" description="In Ref. 3; CAD89899." evidence="16" ref="3">
    <original>F</original>
    <variation>L</variation>
    <location>
        <position position="1357"/>
    </location>
</feature>
<feature type="sequence conflict" description="In Ref. 3; CAE45846." evidence="16" ref="3">
    <original>S</original>
    <variation>L</variation>
    <location>
        <position position="1414"/>
    </location>
</feature>
<feature type="sequence conflict" description="In Ref. 3; CAD89910." evidence="16" ref="3">
    <original>I</original>
    <variation>V</variation>
    <location>
        <position position="1563"/>
    </location>
</feature>
<feature type="sequence conflict" description="In Ref. 3; CAD89910." evidence="16" ref="3">
    <original>P</original>
    <variation>H</variation>
    <location>
        <position position="1607"/>
    </location>
</feature>
<feature type="sequence conflict" description="In Ref. 3; CAD38623." evidence="16" ref="3">
    <original>S</original>
    <variation>P</variation>
    <location>
        <position position="1672"/>
    </location>
</feature>
<feature type="sequence conflict" description="In Ref. 3; CAD89910/CAD89998 and 4." evidence="16" ref="3 4">
    <original>Y</original>
    <variation>YQ</variation>
    <location>
        <position position="1696"/>
    </location>
</feature>
<feature type="sequence conflict" description="In Ref. 3; CAD89899." evidence="16" ref="3">
    <original>R</original>
    <variation>Q</variation>
    <location>
        <position position="1697"/>
    </location>
</feature>
<gene>
    <name evidence="23" type="primary">NRAP</name>
</gene>